<comment type="function">
    <text evidence="1">Transcription regulator that activates transcription by stimulating RNA polymerase (RNAP) recycling in case of stress conditions such as supercoiled DNA or high salt concentrations. Probably acts by releasing the RNAP, when it is trapped or immobilized on tightly supercoiled DNA. Does not activate transcription on linear DNA. Probably not involved in DNA repair.</text>
</comment>
<comment type="subunit">
    <text evidence="1">Interacts with the RNAP. Has a higher affinity for the core RNAP than for the holoenzyme. Its ATPase activity is stimulated by binding to RNAP.</text>
</comment>
<comment type="similarity">
    <text evidence="1">Belongs to the SNF2/RAD54 helicase family. RapA subfamily.</text>
</comment>
<gene>
    <name evidence="1" type="primary">rapA</name>
    <name type="ordered locus">SSPA0093</name>
</gene>
<reference key="1">
    <citation type="journal article" date="2009" name="BMC Genomics">
        <title>Pseudogene accumulation in the evolutionary histories of Salmonella enterica serovars Paratyphi A and Typhi.</title>
        <authorList>
            <person name="Holt K.E."/>
            <person name="Thomson N.R."/>
            <person name="Wain J."/>
            <person name="Langridge G.C."/>
            <person name="Hasan R."/>
            <person name="Bhutta Z.A."/>
            <person name="Quail M.A."/>
            <person name="Norbertczak H."/>
            <person name="Walker D."/>
            <person name="Simmonds M."/>
            <person name="White B."/>
            <person name="Bason N."/>
            <person name="Mungall K."/>
            <person name="Dougan G."/>
            <person name="Parkhill J."/>
        </authorList>
    </citation>
    <scope>NUCLEOTIDE SEQUENCE [LARGE SCALE GENOMIC DNA]</scope>
    <source>
        <strain>AKU_12601</strain>
    </source>
</reference>
<keyword id="KW-0010">Activator</keyword>
<keyword id="KW-0067">ATP-binding</keyword>
<keyword id="KW-0238">DNA-binding</keyword>
<keyword id="KW-0347">Helicase</keyword>
<keyword id="KW-0378">Hydrolase</keyword>
<keyword id="KW-0547">Nucleotide-binding</keyword>
<keyword id="KW-0804">Transcription</keyword>
<keyword id="KW-0805">Transcription regulation</keyword>
<protein>
    <recommendedName>
        <fullName evidence="1">RNA polymerase-associated protein RapA</fullName>
        <ecNumber evidence="1">3.6.4.-</ecNumber>
    </recommendedName>
    <alternativeName>
        <fullName evidence="1">ATP-dependent helicase HepA</fullName>
    </alternativeName>
</protein>
<proteinExistence type="inferred from homology"/>
<organism>
    <name type="scientific">Salmonella paratyphi A (strain AKU_12601)</name>
    <dbReference type="NCBI Taxonomy" id="554290"/>
    <lineage>
        <taxon>Bacteria</taxon>
        <taxon>Pseudomonadati</taxon>
        <taxon>Pseudomonadota</taxon>
        <taxon>Gammaproteobacteria</taxon>
        <taxon>Enterobacterales</taxon>
        <taxon>Enterobacteriaceae</taxon>
        <taxon>Salmonella</taxon>
    </lineage>
</organism>
<name>RAPA_SALPK</name>
<feature type="chain" id="PRO_1000188188" description="RNA polymerase-associated protein RapA">
    <location>
        <begin position="1"/>
        <end position="968"/>
    </location>
</feature>
<feature type="domain" description="Helicase ATP-binding" evidence="1">
    <location>
        <begin position="164"/>
        <end position="334"/>
    </location>
</feature>
<feature type="domain" description="Helicase C-terminal" evidence="1">
    <location>
        <begin position="490"/>
        <end position="685"/>
    </location>
</feature>
<feature type="short sequence motif" description="DEAH box">
    <location>
        <begin position="280"/>
        <end position="283"/>
    </location>
</feature>
<feature type="binding site" evidence="1">
    <location>
        <begin position="177"/>
        <end position="184"/>
    </location>
    <ligand>
        <name>ATP</name>
        <dbReference type="ChEBI" id="CHEBI:30616"/>
    </ligand>
</feature>
<accession>B5BL33</accession>
<sequence>MPFTFGQRWISDTESELGLGTVVAMDARTVTLLFPSTGENRLYARSDSPVTRVMFNPGDTITSHEGWQLHIDEVKEENGLLVYVGTRLDTEETNVTLREVLLDSKLVFSKPQDRLFAGQIDRMDRFALRYRARKFQSEQYRMPYSGLRGQRTNLIPHQLNIAHDVGRRHAPRVLLADEVGLGKTIEAGMILHQQLLSGAAERVLIIVPETLQHQWLVEMLRRFNLRFALFDDERYTEAQHDAYNPFETEQLVICSLDFARRNKQRLEHLCDAEWDLLVVDEAHHLVWSTDAPSREYMAIEQLAERVPGVLLLTATPEQLGMESHFARLRLLDPNRFHDFEQFVEEQKNYRPVADAVAMLLAGNKLSNDELNRLGDLIGEQDIEPLLQAANSDRDDAQAARDELVSMLMDRHGTSRVLFRNTRNGVKGFPKRELHTVKLPLPTQYQTAIKVSGIMGARKSAEDRARDMLYPEQIYQEFEGDTGTWWNFDPRVEWLMGYLTSHRSQKVLVICAKATTALQLEQVLREREGIRAAVFHEGMSIIERDRAAAWFAEEDTGAQVLLCSEIGSEGRNFQFASNLVMFDLPFNPDLLEQRIGRLDRIGQAHDIQIHVPYLEKTAQSVLVRWYHEGLDAFEHTCPTGRAIYDSAYASLINYLAAPEETDGFDDLIKSCREQHEALKAQLEQGRDRLLEIHSNGGEKAQQLAQSIEEQDDDTNLIAFAMNLFDIVGINQDDRGDNLIVLTPSDHMLVPDFPGLPEDGCTITFERDVALSREDAQFITWEHPLIRNGLDLILSGDTGSSTISLLKNKALPVGTLLVELVYVVEAQAPKQLQLNRFLPPTPVRMLLDKNGNNLAAQVEFETFNRQLSAVNRHTGSKLVNAVQQDVHAILQLGETQIEKSARALIDNARREADEKLSGELSRLEALRAVNPNIRDDELAAIDSNRQQVLESLNQAGWRLDALRFIVVTHQ</sequence>
<evidence type="ECO:0000255" key="1">
    <source>
        <dbReference type="HAMAP-Rule" id="MF_01821"/>
    </source>
</evidence>
<dbReference type="EC" id="3.6.4.-" evidence="1"/>
<dbReference type="EMBL" id="FM200053">
    <property type="protein sequence ID" value="CAR58204.1"/>
    <property type="molecule type" value="Genomic_DNA"/>
</dbReference>
<dbReference type="RefSeq" id="WP_001116900.1">
    <property type="nucleotide sequence ID" value="NC_011147.1"/>
</dbReference>
<dbReference type="SMR" id="B5BL33"/>
<dbReference type="KEGG" id="sek:SSPA0093"/>
<dbReference type="HOGENOM" id="CLU_011520_0_0_6"/>
<dbReference type="Proteomes" id="UP000001869">
    <property type="component" value="Chromosome"/>
</dbReference>
<dbReference type="GO" id="GO:0005524">
    <property type="term" value="F:ATP binding"/>
    <property type="evidence" value="ECO:0007669"/>
    <property type="project" value="UniProtKB-UniRule"/>
</dbReference>
<dbReference type="GO" id="GO:0003677">
    <property type="term" value="F:DNA binding"/>
    <property type="evidence" value="ECO:0007669"/>
    <property type="project" value="UniProtKB-KW"/>
</dbReference>
<dbReference type="GO" id="GO:0004386">
    <property type="term" value="F:helicase activity"/>
    <property type="evidence" value="ECO:0007669"/>
    <property type="project" value="UniProtKB-UniRule"/>
</dbReference>
<dbReference type="GO" id="GO:0016817">
    <property type="term" value="F:hydrolase activity, acting on acid anhydrides"/>
    <property type="evidence" value="ECO:0007669"/>
    <property type="project" value="InterPro"/>
</dbReference>
<dbReference type="GO" id="GO:0006355">
    <property type="term" value="P:regulation of DNA-templated transcription"/>
    <property type="evidence" value="ECO:0007669"/>
    <property type="project" value="UniProtKB-UniRule"/>
</dbReference>
<dbReference type="CDD" id="cd18011">
    <property type="entry name" value="DEXDc_RapA"/>
    <property type="match status" value="1"/>
</dbReference>
<dbReference type="CDD" id="cd18793">
    <property type="entry name" value="SF2_C_SNF"/>
    <property type="match status" value="1"/>
</dbReference>
<dbReference type="FunFam" id="2.30.30.140:FF:000020">
    <property type="entry name" value="RNA polymerase-associated protein RapA"/>
    <property type="match status" value="1"/>
</dbReference>
<dbReference type="FunFam" id="3.30.360.80:FF:000001">
    <property type="entry name" value="RNA polymerase-associated protein RapA"/>
    <property type="match status" value="1"/>
</dbReference>
<dbReference type="FunFam" id="3.40.50.10810:FF:000012">
    <property type="entry name" value="RNA polymerase-associated protein RapA"/>
    <property type="match status" value="1"/>
</dbReference>
<dbReference type="FunFam" id="3.40.50.300:FF:000350">
    <property type="entry name" value="RNA polymerase-associated protein RapA"/>
    <property type="match status" value="1"/>
</dbReference>
<dbReference type="Gene3D" id="2.30.30.140">
    <property type="match status" value="1"/>
</dbReference>
<dbReference type="Gene3D" id="2.30.30.930">
    <property type="match status" value="1"/>
</dbReference>
<dbReference type="Gene3D" id="3.30.360.80">
    <property type="match status" value="1"/>
</dbReference>
<dbReference type="Gene3D" id="6.10.140.1500">
    <property type="match status" value="1"/>
</dbReference>
<dbReference type="Gene3D" id="6.10.140.2230">
    <property type="match status" value="1"/>
</dbReference>
<dbReference type="Gene3D" id="3.40.50.300">
    <property type="entry name" value="P-loop containing nucleotide triphosphate hydrolases"/>
    <property type="match status" value="1"/>
</dbReference>
<dbReference type="Gene3D" id="3.40.50.10810">
    <property type="entry name" value="Tandem AAA-ATPase domain"/>
    <property type="match status" value="1"/>
</dbReference>
<dbReference type="HAMAP" id="MF_01821">
    <property type="entry name" value="Helicase_RapA"/>
    <property type="match status" value="1"/>
</dbReference>
<dbReference type="InterPro" id="IPR014001">
    <property type="entry name" value="Helicase_ATP-bd"/>
</dbReference>
<dbReference type="InterPro" id="IPR001650">
    <property type="entry name" value="Helicase_C-like"/>
</dbReference>
<dbReference type="InterPro" id="IPR023949">
    <property type="entry name" value="Helicase_RapA"/>
</dbReference>
<dbReference type="InterPro" id="IPR027417">
    <property type="entry name" value="P-loop_NTPase"/>
</dbReference>
<dbReference type="InterPro" id="IPR022737">
    <property type="entry name" value="RapA_C"/>
</dbReference>
<dbReference type="InterPro" id="IPR038718">
    <property type="entry name" value="SNF2-like_sf"/>
</dbReference>
<dbReference type="InterPro" id="IPR049730">
    <property type="entry name" value="SNF2/RAD54-like_C"/>
</dbReference>
<dbReference type="InterPro" id="IPR000330">
    <property type="entry name" value="SNF2_N"/>
</dbReference>
<dbReference type="InterPro" id="IPR040765">
    <property type="entry name" value="Tudor_1_RapA"/>
</dbReference>
<dbReference type="InterPro" id="IPR040766">
    <property type="entry name" value="Tudor_2_RapA"/>
</dbReference>
<dbReference type="NCBIfam" id="NF003426">
    <property type="entry name" value="PRK04914.1"/>
    <property type="match status" value="1"/>
</dbReference>
<dbReference type="PANTHER" id="PTHR45766">
    <property type="entry name" value="DNA ANNEALING HELICASE AND ENDONUCLEASE ZRANB3 FAMILY MEMBER"/>
    <property type="match status" value="1"/>
</dbReference>
<dbReference type="PANTHER" id="PTHR45766:SF6">
    <property type="entry name" value="SWI_SNF-RELATED MATRIX-ASSOCIATED ACTIN-DEPENDENT REGULATOR OF CHROMATIN SUBFAMILY A-LIKE PROTEIN 1"/>
    <property type="match status" value="1"/>
</dbReference>
<dbReference type="Pfam" id="PF00271">
    <property type="entry name" value="Helicase_C"/>
    <property type="match status" value="1"/>
</dbReference>
<dbReference type="Pfam" id="PF12137">
    <property type="entry name" value="RapA_C"/>
    <property type="match status" value="1"/>
</dbReference>
<dbReference type="Pfam" id="PF00176">
    <property type="entry name" value="SNF2-rel_dom"/>
    <property type="match status" value="1"/>
</dbReference>
<dbReference type="Pfam" id="PF18339">
    <property type="entry name" value="Tudor_1_RapA"/>
    <property type="match status" value="1"/>
</dbReference>
<dbReference type="Pfam" id="PF18337">
    <property type="entry name" value="Tudor_RapA"/>
    <property type="match status" value="1"/>
</dbReference>
<dbReference type="SMART" id="SM00487">
    <property type="entry name" value="DEXDc"/>
    <property type="match status" value="1"/>
</dbReference>
<dbReference type="SMART" id="SM00490">
    <property type="entry name" value="HELICc"/>
    <property type="match status" value="1"/>
</dbReference>
<dbReference type="SUPFAM" id="SSF52540">
    <property type="entry name" value="P-loop containing nucleoside triphosphate hydrolases"/>
    <property type="match status" value="2"/>
</dbReference>
<dbReference type="PROSITE" id="PS51192">
    <property type="entry name" value="HELICASE_ATP_BIND_1"/>
    <property type="match status" value="1"/>
</dbReference>
<dbReference type="PROSITE" id="PS51194">
    <property type="entry name" value="HELICASE_CTER"/>
    <property type="match status" value="1"/>
</dbReference>